<feature type="signal peptide" evidence="1">
    <location>
        <begin position="1"/>
        <end position="19"/>
    </location>
</feature>
<feature type="chain" id="PRO_0000292553" description="Penicillin-insensitive murein endopeptidase">
    <location>
        <begin position="20"/>
        <end position="274"/>
    </location>
</feature>
<feature type="region of interest" description="Disordered" evidence="2">
    <location>
        <begin position="227"/>
        <end position="274"/>
    </location>
</feature>
<feature type="binding site" evidence="1">
    <location>
        <position position="110"/>
    </location>
    <ligand>
        <name>Zn(2+)</name>
        <dbReference type="ChEBI" id="CHEBI:29105"/>
        <label>1</label>
    </ligand>
</feature>
<feature type="binding site" evidence="1">
    <location>
        <position position="113"/>
    </location>
    <ligand>
        <name>Zn(2+)</name>
        <dbReference type="ChEBI" id="CHEBI:29105"/>
        <label>1</label>
    </ligand>
</feature>
<feature type="binding site" evidence="1">
    <location>
        <position position="120"/>
    </location>
    <ligand>
        <name>Zn(2+)</name>
        <dbReference type="ChEBI" id="CHEBI:29105"/>
        <label>1</label>
    </ligand>
</feature>
<feature type="binding site" evidence="1">
    <location>
        <position position="147"/>
    </location>
    <ligand>
        <name>Zn(2+)</name>
        <dbReference type="ChEBI" id="CHEBI:29105"/>
        <label>2</label>
    </ligand>
</feature>
<feature type="binding site" evidence="1">
    <location>
        <position position="150"/>
    </location>
    <ligand>
        <name>Zn(2+)</name>
        <dbReference type="ChEBI" id="CHEBI:29105"/>
        <label>2</label>
    </ligand>
</feature>
<feature type="binding site" evidence="1">
    <location>
        <position position="211"/>
    </location>
    <ligand>
        <name>Zn(2+)</name>
        <dbReference type="ChEBI" id="CHEBI:29105"/>
        <label>1</label>
    </ligand>
</feature>
<feature type="disulfide bond" evidence="1">
    <location>
        <begin position="44"/>
        <end position="265"/>
    </location>
</feature>
<feature type="disulfide bond" evidence="1">
    <location>
        <begin position="187"/>
        <end position="235"/>
    </location>
</feature>
<feature type="disulfide bond" evidence="1">
    <location>
        <begin position="216"/>
        <end position="223"/>
    </location>
</feature>
<evidence type="ECO:0000255" key="1">
    <source>
        <dbReference type="HAMAP-Rule" id="MF_01623"/>
    </source>
</evidence>
<evidence type="ECO:0000256" key="2">
    <source>
        <dbReference type="SAM" id="MobiDB-lite"/>
    </source>
</evidence>
<dbReference type="EC" id="3.4.24.-" evidence="1"/>
<dbReference type="EMBL" id="CP000243">
    <property type="protein sequence ID" value="ABE08080.1"/>
    <property type="molecule type" value="Genomic_DNA"/>
</dbReference>
<dbReference type="RefSeq" id="WP_001043802.1">
    <property type="nucleotide sequence ID" value="NZ_CP064825.1"/>
</dbReference>
<dbReference type="SMR" id="Q1R984"/>
<dbReference type="MEROPS" id="M74.001"/>
<dbReference type="KEGG" id="eci:UTI89_C2613"/>
<dbReference type="HOGENOM" id="CLU_052496_0_0_6"/>
<dbReference type="Proteomes" id="UP000001952">
    <property type="component" value="Chromosome"/>
</dbReference>
<dbReference type="GO" id="GO:0030288">
    <property type="term" value="C:outer membrane-bounded periplasmic space"/>
    <property type="evidence" value="ECO:0007669"/>
    <property type="project" value="InterPro"/>
</dbReference>
<dbReference type="GO" id="GO:0046872">
    <property type="term" value="F:metal ion binding"/>
    <property type="evidence" value="ECO:0007669"/>
    <property type="project" value="UniProtKB-KW"/>
</dbReference>
<dbReference type="GO" id="GO:0004222">
    <property type="term" value="F:metalloendopeptidase activity"/>
    <property type="evidence" value="ECO:0007669"/>
    <property type="project" value="UniProtKB-UniRule"/>
</dbReference>
<dbReference type="GO" id="GO:0004252">
    <property type="term" value="F:serine-type endopeptidase activity"/>
    <property type="evidence" value="ECO:0007669"/>
    <property type="project" value="InterPro"/>
</dbReference>
<dbReference type="GO" id="GO:0000270">
    <property type="term" value="P:peptidoglycan metabolic process"/>
    <property type="evidence" value="ECO:0007669"/>
    <property type="project" value="UniProtKB-UniRule"/>
</dbReference>
<dbReference type="GO" id="GO:0006508">
    <property type="term" value="P:proteolysis"/>
    <property type="evidence" value="ECO:0007669"/>
    <property type="project" value="UniProtKB-KW"/>
</dbReference>
<dbReference type="FunFam" id="3.30.1380.10:FF:000002">
    <property type="entry name" value="Penicillin-insensitive murein endopeptidase"/>
    <property type="match status" value="1"/>
</dbReference>
<dbReference type="Gene3D" id="3.30.1380.10">
    <property type="match status" value="1"/>
</dbReference>
<dbReference type="HAMAP" id="MF_01623">
    <property type="entry name" value="MepA"/>
    <property type="match status" value="1"/>
</dbReference>
<dbReference type="InterPro" id="IPR009045">
    <property type="entry name" value="Hedgehog_sig/DD-Pept_Zn-bd_sf"/>
</dbReference>
<dbReference type="InterPro" id="IPR005073">
    <property type="entry name" value="Peptidase_M74"/>
</dbReference>
<dbReference type="NCBIfam" id="NF006947">
    <property type="entry name" value="PRK09429.1"/>
    <property type="match status" value="1"/>
</dbReference>
<dbReference type="Pfam" id="PF03411">
    <property type="entry name" value="Peptidase_M74"/>
    <property type="match status" value="1"/>
</dbReference>
<dbReference type="PIRSF" id="PIRSF018455">
    <property type="entry name" value="MepA"/>
    <property type="match status" value="1"/>
</dbReference>
<dbReference type="SUPFAM" id="SSF55166">
    <property type="entry name" value="Hedgehog/DD-peptidase"/>
    <property type="match status" value="1"/>
</dbReference>
<gene>
    <name evidence="1" type="primary">mepA</name>
    <name type="ordered locus">UTI89_C2613</name>
</gene>
<protein>
    <recommendedName>
        <fullName evidence="1">Penicillin-insensitive murein endopeptidase</fullName>
        <ecNumber evidence="1">3.4.24.-</ecNumber>
    </recommendedName>
    <alternativeName>
        <fullName evidence="1">D-alanyl-D-alanine-endopeptidase</fullName>
        <shortName evidence="1">DD-endopeptidase</shortName>
    </alternativeName>
</protein>
<accession>Q1R984</accession>
<proteinExistence type="inferred from homology"/>
<name>MEPA_ECOUT</name>
<sequence length="274" mass="30196">MNKTAIALLALLASSASLAATPWQKITQPVPGSAQSIGSFSNGCIVGADTLPIQSEHYQVMRTDQRRYFGHPDLVMFIQRLSRQVSNLGMGTVLIGDMGMPAGGRFNGGHASHQTGLDVDIFLQLPKTRWTSAQLLRPQALDLVSRDGKHVVPALWKPEIFSLIKLAAQDKDVTRIFVNPAIKQQLCLDAGTDRDWLRKVRPWFQHRAHMHVRLRCPADSLECEDQPLPPPGDGCGAELQSWFEPPKPGTTKPEKKTPPPLPPSCQALLDEHVI</sequence>
<keyword id="KW-1015">Disulfide bond</keyword>
<keyword id="KW-0378">Hydrolase</keyword>
<keyword id="KW-0479">Metal-binding</keyword>
<keyword id="KW-0482">Metalloprotease</keyword>
<keyword id="KW-0574">Periplasm</keyword>
<keyword id="KW-0645">Protease</keyword>
<keyword id="KW-0732">Signal</keyword>
<keyword id="KW-0862">Zinc</keyword>
<reference key="1">
    <citation type="journal article" date="2006" name="Proc. Natl. Acad. Sci. U.S.A.">
        <title>Identification of genes subject to positive selection in uropathogenic strains of Escherichia coli: a comparative genomics approach.</title>
        <authorList>
            <person name="Chen S.L."/>
            <person name="Hung C.-S."/>
            <person name="Xu J."/>
            <person name="Reigstad C.S."/>
            <person name="Magrini V."/>
            <person name="Sabo A."/>
            <person name="Blasiar D."/>
            <person name="Bieri T."/>
            <person name="Meyer R.R."/>
            <person name="Ozersky P."/>
            <person name="Armstrong J.R."/>
            <person name="Fulton R.S."/>
            <person name="Latreille J.P."/>
            <person name="Spieth J."/>
            <person name="Hooton T.M."/>
            <person name="Mardis E.R."/>
            <person name="Hultgren S.J."/>
            <person name="Gordon J.I."/>
        </authorList>
    </citation>
    <scope>NUCLEOTIDE SEQUENCE [LARGE SCALE GENOMIC DNA]</scope>
    <source>
        <strain>UTI89 / UPEC</strain>
    </source>
</reference>
<organism>
    <name type="scientific">Escherichia coli (strain UTI89 / UPEC)</name>
    <dbReference type="NCBI Taxonomy" id="364106"/>
    <lineage>
        <taxon>Bacteria</taxon>
        <taxon>Pseudomonadati</taxon>
        <taxon>Pseudomonadota</taxon>
        <taxon>Gammaproteobacteria</taxon>
        <taxon>Enterobacterales</taxon>
        <taxon>Enterobacteriaceae</taxon>
        <taxon>Escherichia</taxon>
    </lineage>
</organism>
<comment type="function">
    <text evidence="1">Murein endopeptidase that cleaves the D-alanyl-meso-2,6-diamino-pimelyl amide bond that connects peptidoglycan strands. Likely plays a role in the removal of murein from the sacculus.</text>
</comment>
<comment type="cofactor">
    <cofactor evidence="1">
        <name>Zn(2+)</name>
        <dbReference type="ChEBI" id="CHEBI:29105"/>
    </cofactor>
    <text evidence="1">Binds 2 Zn(2+) ions per subunit. Zn(2+) ion 1 is bound in the active site. Zn(2+) ion 2 is bound at the dimer interface by residues from both subunits.</text>
</comment>
<comment type="subunit">
    <text evidence="1">Dimer.</text>
</comment>
<comment type="subcellular location">
    <subcellularLocation>
        <location evidence="1">Periplasm</location>
    </subcellularLocation>
</comment>
<comment type="similarity">
    <text evidence="1">Belongs to the peptidase M74 family.</text>
</comment>